<sequence>MARMGISKGGSGKEAKKPPLLLGRFEVGKLLGQGNFAKVYHARNVATGEEVAIKVMEKEKIFKSGLTAHIKREIAVLRRVRHPHIVQLYEVMATKLRIYFVMEYVRGGELFARVARGRLPEADARRYFQQLVSAVAFCHARGVFHRDIKPENLLVDDAGDLKVSDFGLSAVADGMRRDGLFHTFCGTPAYVAPEVLSRRGYDAAGADLWSCGVVLFVLMAGYLPFQDRNLAGMYRKIHKGDFRCPKWFSPELIRLLRGVLVTNPQRRATAEGIMENEWFKIGFRRFSFRVEDDRTFTCFELDDDAAVDAPTSPPDTPRTVDSGDVGAAPTRPRKAGSLTSCDSAPSLLEGRFGLGGSSRRRSSLNAFDIISFSPGFDLSGLFDQDDGGGAGAGSIPEQQKHTARFVSAAPVEVIVATLEAAAAAAGMAVREREDGSISMEGTREGEHGALAVAAEIYELTPELVVVEVRRKAGGAAEYEEFFRARLKPSLRELVCDDRPCPEDSGELSRSL</sequence>
<comment type="function">
    <text evidence="1">CIPK serine-threonine protein kinases interact with CBL proteins. Binding of a CBL protein to the regulatory NAF domain of CIPK protein lead to the activation of the kinase in a calcium-dependent manner (By similarity).</text>
</comment>
<comment type="catalytic activity">
    <reaction>
        <text>L-seryl-[protein] + ATP = O-phospho-L-seryl-[protein] + ADP + H(+)</text>
        <dbReference type="Rhea" id="RHEA:17989"/>
        <dbReference type="Rhea" id="RHEA-COMP:9863"/>
        <dbReference type="Rhea" id="RHEA-COMP:11604"/>
        <dbReference type="ChEBI" id="CHEBI:15378"/>
        <dbReference type="ChEBI" id="CHEBI:29999"/>
        <dbReference type="ChEBI" id="CHEBI:30616"/>
        <dbReference type="ChEBI" id="CHEBI:83421"/>
        <dbReference type="ChEBI" id="CHEBI:456216"/>
        <dbReference type="EC" id="2.7.11.1"/>
    </reaction>
</comment>
<comment type="catalytic activity">
    <reaction>
        <text>L-threonyl-[protein] + ATP = O-phospho-L-threonyl-[protein] + ADP + H(+)</text>
        <dbReference type="Rhea" id="RHEA:46608"/>
        <dbReference type="Rhea" id="RHEA-COMP:11060"/>
        <dbReference type="Rhea" id="RHEA-COMP:11605"/>
        <dbReference type="ChEBI" id="CHEBI:15378"/>
        <dbReference type="ChEBI" id="CHEBI:30013"/>
        <dbReference type="ChEBI" id="CHEBI:30616"/>
        <dbReference type="ChEBI" id="CHEBI:61977"/>
        <dbReference type="ChEBI" id="CHEBI:456216"/>
        <dbReference type="EC" id="2.7.11.1"/>
    </reaction>
</comment>
<comment type="cofactor">
    <cofactor evidence="1">
        <name>Mn(2+)</name>
        <dbReference type="ChEBI" id="CHEBI:29035"/>
    </cofactor>
</comment>
<comment type="domain">
    <text evidence="1">The activation loop within the kinase domain is the target of phosphorylation/activation by upstream protein kinases. The PPI motif mediates the interaction with the ABI (abscisic acid-insensitive) phosphatases (By similarity).</text>
</comment>
<comment type="similarity">
    <text evidence="6">Belongs to the protein kinase superfamily. CAMK Ser/Thr protein kinase family. SNF1 subfamily.</text>
</comment>
<comment type="sequence caution" evidence="6">
    <conflict type="erroneous gene model prediction">
        <sequence resource="EMBL-CDS" id="BAF04258"/>
    </conflict>
</comment>
<keyword id="KW-0067">ATP-binding</keyword>
<keyword id="KW-0418">Kinase</keyword>
<keyword id="KW-0464">Manganese</keyword>
<keyword id="KW-0547">Nucleotide-binding</keyword>
<keyword id="KW-1185">Reference proteome</keyword>
<keyword id="KW-0723">Serine/threonine-protein kinase</keyword>
<keyword id="KW-0808">Transferase</keyword>
<dbReference type="EC" id="2.7.11.1"/>
<dbReference type="EMBL" id="AP001551">
    <property type="protein sequence ID" value="BAD72994.1"/>
    <property type="molecule type" value="Genomic_DNA"/>
</dbReference>
<dbReference type="EMBL" id="AP003052">
    <property type="protein sequence ID" value="BAD73090.1"/>
    <property type="molecule type" value="Genomic_DNA"/>
</dbReference>
<dbReference type="EMBL" id="AP008207">
    <property type="protein sequence ID" value="BAF04258.2"/>
    <property type="status" value="ALT_SEQ"/>
    <property type="molecule type" value="Genomic_DNA"/>
</dbReference>
<dbReference type="EMBL" id="AP014957">
    <property type="protein sequence ID" value="BAS70944.1"/>
    <property type="molecule type" value="Genomic_DNA"/>
</dbReference>
<dbReference type="RefSeq" id="XP_015621590.1">
    <property type="nucleotide sequence ID" value="XM_015766104.1"/>
</dbReference>
<dbReference type="SMR" id="Q5QNM6"/>
<dbReference type="FunCoup" id="Q5QNM6">
    <property type="interactions" value="115"/>
</dbReference>
<dbReference type="STRING" id="39947.Q5QNM6"/>
<dbReference type="PaxDb" id="39947-Q5QNM6"/>
<dbReference type="EnsemblPlants" id="Os01t0206300-00">
    <property type="protein sequence ID" value="Os01t0206300-00"/>
    <property type="gene ID" value="Os01g0206300"/>
</dbReference>
<dbReference type="Gramene" id="Os01t0206300-00">
    <property type="protein sequence ID" value="Os01t0206300-00"/>
    <property type="gene ID" value="Os01g0206300"/>
</dbReference>
<dbReference type="KEGG" id="dosa:Os01g0206300"/>
<dbReference type="eggNOG" id="KOG0583">
    <property type="taxonomic scope" value="Eukaryota"/>
</dbReference>
<dbReference type="HOGENOM" id="CLU_000288_59_0_1"/>
<dbReference type="InParanoid" id="Q5QNM6"/>
<dbReference type="OMA" id="WFKIGFR"/>
<dbReference type="OrthoDB" id="193931at2759"/>
<dbReference type="Proteomes" id="UP000000763">
    <property type="component" value="Chromosome 1"/>
</dbReference>
<dbReference type="Proteomes" id="UP000059680">
    <property type="component" value="Chromosome 1"/>
</dbReference>
<dbReference type="GO" id="GO:0005524">
    <property type="term" value="F:ATP binding"/>
    <property type="evidence" value="ECO:0007669"/>
    <property type="project" value="UniProtKB-KW"/>
</dbReference>
<dbReference type="GO" id="GO:0106310">
    <property type="term" value="F:protein serine kinase activity"/>
    <property type="evidence" value="ECO:0007669"/>
    <property type="project" value="RHEA"/>
</dbReference>
<dbReference type="GO" id="GO:0004674">
    <property type="term" value="F:protein serine/threonine kinase activity"/>
    <property type="evidence" value="ECO:0000318"/>
    <property type="project" value="GO_Central"/>
</dbReference>
<dbReference type="GO" id="GO:0007165">
    <property type="term" value="P:signal transduction"/>
    <property type="evidence" value="ECO:0000318"/>
    <property type="project" value="GO_Central"/>
</dbReference>
<dbReference type="CDD" id="cd12195">
    <property type="entry name" value="CIPK_C"/>
    <property type="match status" value="1"/>
</dbReference>
<dbReference type="FunFam" id="1.10.510.10:FF:000571">
    <property type="entry name" value="Maternal embryonic leucine zipper kinase"/>
    <property type="match status" value="1"/>
</dbReference>
<dbReference type="FunFam" id="3.30.200.20:FF:000096">
    <property type="entry name" value="Non-specific serine/threonine protein kinase"/>
    <property type="match status" value="1"/>
</dbReference>
<dbReference type="FunFam" id="3.30.310.80:FF:000005">
    <property type="entry name" value="Non-specific serine/threonine protein kinase"/>
    <property type="match status" value="1"/>
</dbReference>
<dbReference type="Gene3D" id="3.30.310.80">
    <property type="entry name" value="Kinase associated domain 1, KA1"/>
    <property type="match status" value="1"/>
</dbReference>
<dbReference type="Gene3D" id="1.10.510.10">
    <property type="entry name" value="Transferase(Phosphotransferase) domain 1"/>
    <property type="match status" value="1"/>
</dbReference>
<dbReference type="InterPro" id="IPR011009">
    <property type="entry name" value="Kinase-like_dom_sf"/>
</dbReference>
<dbReference type="InterPro" id="IPR018451">
    <property type="entry name" value="NAF/FISL_domain"/>
</dbReference>
<dbReference type="InterPro" id="IPR004041">
    <property type="entry name" value="NAF_dom"/>
</dbReference>
<dbReference type="InterPro" id="IPR000719">
    <property type="entry name" value="Prot_kinase_dom"/>
</dbReference>
<dbReference type="InterPro" id="IPR017441">
    <property type="entry name" value="Protein_kinase_ATP_BS"/>
</dbReference>
<dbReference type="InterPro" id="IPR008271">
    <property type="entry name" value="Ser/Thr_kinase_AS"/>
</dbReference>
<dbReference type="PANTHER" id="PTHR43895">
    <property type="entry name" value="CALCIUM/CALMODULIN-DEPENDENT PROTEIN KINASE KINASE-RELATED"/>
    <property type="match status" value="1"/>
</dbReference>
<dbReference type="PANTHER" id="PTHR43895:SF17">
    <property type="entry name" value="CBL-INTERACTING PROTEIN KINASE 13-RELATED"/>
    <property type="match status" value="1"/>
</dbReference>
<dbReference type="Pfam" id="PF03822">
    <property type="entry name" value="NAF"/>
    <property type="match status" value="1"/>
</dbReference>
<dbReference type="Pfam" id="PF00069">
    <property type="entry name" value="Pkinase"/>
    <property type="match status" value="1"/>
</dbReference>
<dbReference type="SMART" id="SM00220">
    <property type="entry name" value="S_TKc"/>
    <property type="match status" value="1"/>
</dbReference>
<dbReference type="SUPFAM" id="SSF56112">
    <property type="entry name" value="Protein kinase-like (PK-like)"/>
    <property type="match status" value="1"/>
</dbReference>
<dbReference type="PROSITE" id="PS50816">
    <property type="entry name" value="NAF"/>
    <property type="match status" value="1"/>
</dbReference>
<dbReference type="PROSITE" id="PS00107">
    <property type="entry name" value="PROTEIN_KINASE_ATP"/>
    <property type="match status" value="1"/>
</dbReference>
<dbReference type="PROSITE" id="PS50011">
    <property type="entry name" value="PROTEIN_KINASE_DOM"/>
    <property type="match status" value="1"/>
</dbReference>
<dbReference type="PROSITE" id="PS00108">
    <property type="entry name" value="PROTEIN_KINASE_ST"/>
    <property type="match status" value="1"/>
</dbReference>
<evidence type="ECO:0000250" key="1"/>
<evidence type="ECO:0000255" key="2">
    <source>
        <dbReference type="PROSITE-ProRule" id="PRU00159"/>
    </source>
</evidence>
<evidence type="ECO:0000255" key="3">
    <source>
        <dbReference type="PROSITE-ProRule" id="PRU00256"/>
    </source>
</evidence>
<evidence type="ECO:0000255" key="4">
    <source>
        <dbReference type="PROSITE-ProRule" id="PRU10027"/>
    </source>
</evidence>
<evidence type="ECO:0000256" key="5">
    <source>
        <dbReference type="SAM" id="MobiDB-lite"/>
    </source>
</evidence>
<evidence type="ECO:0000305" key="6"/>
<proteinExistence type="inferred from homology"/>
<accession>Q5QNM6</accession>
<accession>A0A0P0UZQ0</accession>
<protein>
    <recommendedName>
        <fullName>Putative CBL-interacting protein kinase 13</fullName>
        <ecNumber>2.7.11.1</ecNumber>
    </recommendedName>
    <alternativeName>
        <fullName>OsCIPK13</fullName>
    </alternativeName>
</protein>
<feature type="chain" id="PRO_0000338371" description="Putative CBL-interacting protein kinase 13">
    <location>
        <begin position="1"/>
        <end position="511"/>
    </location>
</feature>
<feature type="domain" description="Protein kinase" evidence="2">
    <location>
        <begin position="25"/>
        <end position="279"/>
    </location>
</feature>
<feature type="domain" description="NAF" evidence="3">
    <location>
        <begin position="321"/>
        <end position="383"/>
    </location>
</feature>
<feature type="region of interest" description="Activation loop" evidence="1">
    <location>
        <begin position="165"/>
        <end position="194"/>
    </location>
</feature>
<feature type="region of interest" description="Disordered" evidence="5">
    <location>
        <begin position="307"/>
        <end position="340"/>
    </location>
</feature>
<feature type="region of interest" description="PPI" evidence="1">
    <location>
        <begin position="400"/>
        <end position="429"/>
    </location>
</feature>
<feature type="active site" description="Proton acceptor" evidence="2 4">
    <location>
        <position position="147"/>
    </location>
</feature>
<feature type="binding site" evidence="2">
    <location>
        <begin position="31"/>
        <end position="39"/>
    </location>
    <ligand>
        <name>ATP</name>
        <dbReference type="ChEBI" id="CHEBI:30616"/>
    </ligand>
</feature>
<feature type="binding site" evidence="2">
    <location>
        <position position="54"/>
    </location>
    <ligand>
        <name>ATP</name>
        <dbReference type="ChEBI" id="CHEBI:30616"/>
    </ligand>
</feature>
<organism>
    <name type="scientific">Oryza sativa subsp. japonica</name>
    <name type="common">Rice</name>
    <dbReference type="NCBI Taxonomy" id="39947"/>
    <lineage>
        <taxon>Eukaryota</taxon>
        <taxon>Viridiplantae</taxon>
        <taxon>Streptophyta</taxon>
        <taxon>Embryophyta</taxon>
        <taxon>Tracheophyta</taxon>
        <taxon>Spermatophyta</taxon>
        <taxon>Magnoliopsida</taxon>
        <taxon>Liliopsida</taxon>
        <taxon>Poales</taxon>
        <taxon>Poaceae</taxon>
        <taxon>BOP clade</taxon>
        <taxon>Oryzoideae</taxon>
        <taxon>Oryzeae</taxon>
        <taxon>Oryzinae</taxon>
        <taxon>Oryza</taxon>
        <taxon>Oryza sativa</taxon>
    </lineage>
</organism>
<name>CIPKD_ORYSJ</name>
<reference key="1">
    <citation type="journal article" date="2002" name="Nature">
        <title>The genome sequence and structure of rice chromosome 1.</title>
        <authorList>
            <person name="Sasaki T."/>
            <person name="Matsumoto T."/>
            <person name="Yamamoto K."/>
            <person name="Sakata K."/>
            <person name="Baba T."/>
            <person name="Katayose Y."/>
            <person name="Wu J."/>
            <person name="Niimura Y."/>
            <person name="Cheng Z."/>
            <person name="Nagamura Y."/>
            <person name="Antonio B.A."/>
            <person name="Kanamori H."/>
            <person name="Hosokawa S."/>
            <person name="Masukawa M."/>
            <person name="Arikawa K."/>
            <person name="Chiden Y."/>
            <person name="Hayashi M."/>
            <person name="Okamoto M."/>
            <person name="Ando T."/>
            <person name="Aoki H."/>
            <person name="Arita K."/>
            <person name="Hamada M."/>
            <person name="Harada C."/>
            <person name="Hijishita S."/>
            <person name="Honda M."/>
            <person name="Ichikawa Y."/>
            <person name="Idonuma A."/>
            <person name="Iijima M."/>
            <person name="Ikeda M."/>
            <person name="Ikeno M."/>
            <person name="Ito S."/>
            <person name="Ito T."/>
            <person name="Ito Y."/>
            <person name="Ito Y."/>
            <person name="Iwabuchi A."/>
            <person name="Kamiya K."/>
            <person name="Karasawa W."/>
            <person name="Katagiri S."/>
            <person name="Kikuta A."/>
            <person name="Kobayashi N."/>
            <person name="Kono I."/>
            <person name="Machita K."/>
            <person name="Maehara T."/>
            <person name="Mizuno H."/>
            <person name="Mizubayashi T."/>
            <person name="Mukai Y."/>
            <person name="Nagasaki H."/>
            <person name="Nakashima M."/>
            <person name="Nakama Y."/>
            <person name="Nakamichi Y."/>
            <person name="Nakamura M."/>
            <person name="Namiki N."/>
            <person name="Negishi M."/>
            <person name="Ohta I."/>
            <person name="Ono N."/>
            <person name="Saji S."/>
            <person name="Sakai K."/>
            <person name="Shibata M."/>
            <person name="Shimokawa T."/>
            <person name="Shomura A."/>
            <person name="Song J."/>
            <person name="Takazaki Y."/>
            <person name="Terasawa K."/>
            <person name="Tsuji K."/>
            <person name="Waki K."/>
            <person name="Yamagata H."/>
            <person name="Yamane H."/>
            <person name="Yoshiki S."/>
            <person name="Yoshihara R."/>
            <person name="Yukawa K."/>
            <person name="Zhong H."/>
            <person name="Iwama H."/>
            <person name="Endo T."/>
            <person name="Ito H."/>
            <person name="Hahn J.H."/>
            <person name="Kim H.-I."/>
            <person name="Eun M.-Y."/>
            <person name="Yano M."/>
            <person name="Jiang J."/>
            <person name="Gojobori T."/>
        </authorList>
    </citation>
    <scope>NUCLEOTIDE SEQUENCE [LARGE SCALE GENOMIC DNA]</scope>
    <source>
        <strain>cv. Nipponbare</strain>
    </source>
</reference>
<reference key="2">
    <citation type="journal article" date="2005" name="Nature">
        <title>The map-based sequence of the rice genome.</title>
        <authorList>
            <consortium name="International rice genome sequencing project (IRGSP)"/>
        </authorList>
    </citation>
    <scope>NUCLEOTIDE SEQUENCE [LARGE SCALE GENOMIC DNA]</scope>
    <source>
        <strain>cv. Nipponbare</strain>
    </source>
</reference>
<reference key="3">
    <citation type="journal article" date="2008" name="Nucleic Acids Res.">
        <title>The rice annotation project database (RAP-DB): 2008 update.</title>
        <authorList>
            <consortium name="The rice annotation project (RAP)"/>
        </authorList>
    </citation>
    <scope>GENOME REANNOTATION</scope>
    <source>
        <strain>cv. Nipponbare</strain>
    </source>
</reference>
<reference key="4">
    <citation type="journal article" date="2013" name="Rice">
        <title>Improvement of the Oryza sativa Nipponbare reference genome using next generation sequence and optical map data.</title>
        <authorList>
            <person name="Kawahara Y."/>
            <person name="de la Bastide M."/>
            <person name="Hamilton J.P."/>
            <person name="Kanamori H."/>
            <person name="McCombie W.R."/>
            <person name="Ouyang S."/>
            <person name="Schwartz D.C."/>
            <person name="Tanaka T."/>
            <person name="Wu J."/>
            <person name="Zhou S."/>
            <person name="Childs K.L."/>
            <person name="Davidson R.M."/>
            <person name="Lin H."/>
            <person name="Quesada-Ocampo L."/>
            <person name="Vaillancourt B."/>
            <person name="Sakai H."/>
            <person name="Lee S.S."/>
            <person name="Kim J."/>
            <person name="Numa H."/>
            <person name="Itoh T."/>
            <person name="Buell C.R."/>
            <person name="Matsumoto T."/>
        </authorList>
    </citation>
    <scope>GENOME REANNOTATION</scope>
    <source>
        <strain>cv. Nipponbare</strain>
    </source>
</reference>
<reference key="5">
    <citation type="journal article" date="2004" name="Plant Physiol.">
        <title>Calcium sensors and their interacting protein kinases: genomics of the Arabidopsis and rice CBL-CIPK signaling networks.</title>
        <authorList>
            <person name="Kolukisaoglu U."/>
            <person name="Weinl S."/>
            <person name="Blazevic D."/>
            <person name="Batistic O."/>
            <person name="Kudla J."/>
        </authorList>
    </citation>
    <scope>GENE FAMILY</scope>
    <scope>NOMENCLATURE</scope>
</reference>
<gene>
    <name type="primary">CIPK13</name>
    <name type="ordered locus">Os01g0206300</name>
    <name type="ordered locus">LOC_Os01g10870</name>
    <name type="ORF">OSJNBa0016I09.1</name>
    <name type="ORF">P0451C06.32</name>
</gene>